<comment type="function">
    <text evidence="1">DNA ligase that catalyzes the formation of phosphodiester linkages between 5'-phosphoryl and 3'-hydroxyl groups in double-stranded DNA using NAD as a coenzyme and as the energy source for the reaction. It is essential for DNA replication and repair of damaged DNA.</text>
</comment>
<comment type="catalytic activity">
    <reaction evidence="1">
        <text>NAD(+) + (deoxyribonucleotide)n-3'-hydroxyl + 5'-phospho-(deoxyribonucleotide)m = (deoxyribonucleotide)n+m + AMP + beta-nicotinamide D-nucleotide.</text>
        <dbReference type="EC" id="6.5.1.2"/>
    </reaction>
</comment>
<comment type="cofactor">
    <cofactor evidence="1">
        <name>Mg(2+)</name>
        <dbReference type="ChEBI" id="CHEBI:18420"/>
    </cofactor>
    <cofactor evidence="1">
        <name>Mn(2+)</name>
        <dbReference type="ChEBI" id="CHEBI:29035"/>
    </cofactor>
</comment>
<comment type="similarity">
    <text evidence="1">Belongs to the NAD-dependent DNA ligase family. LigA subfamily.</text>
</comment>
<comment type="sequence caution" evidence="2">
    <conflict type="erroneous initiation">
        <sequence resource="EMBL-CDS" id="CAM87830"/>
    </conflict>
</comment>
<name>DNLJ_ACIBY</name>
<proteinExistence type="inferred from homology"/>
<accession>B0V8E4</accession>
<gene>
    <name evidence="1" type="primary">ligA</name>
    <name type="ordered locus">ABAYE3010</name>
</gene>
<feature type="chain" id="PRO_0000380278" description="DNA ligase">
    <location>
        <begin position="1"/>
        <end position="678"/>
    </location>
</feature>
<feature type="domain" description="BRCT" evidence="1">
    <location>
        <begin position="594"/>
        <end position="678"/>
    </location>
</feature>
<feature type="active site" description="N6-AMP-lysine intermediate" evidence="1">
    <location>
        <position position="116"/>
    </location>
</feature>
<feature type="binding site" evidence="1">
    <location>
        <begin position="34"/>
        <end position="38"/>
    </location>
    <ligand>
        <name>NAD(+)</name>
        <dbReference type="ChEBI" id="CHEBI:57540"/>
    </ligand>
</feature>
<feature type="binding site" evidence="1">
    <location>
        <begin position="83"/>
        <end position="84"/>
    </location>
    <ligand>
        <name>NAD(+)</name>
        <dbReference type="ChEBI" id="CHEBI:57540"/>
    </ligand>
</feature>
<feature type="binding site" evidence="1">
    <location>
        <position position="114"/>
    </location>
    <ligand>
        <name>NAD(+)</name>
        <dbReference type="ChEBI" id="CHEBI:57540"/>
    </ligand>
</feature>
<feature type="binding site" evidence="1">
    <location>
        <position position="137"/>
    </location>
    <ligand>
        <name>NAD(+)</name>
        <dbReference type="ChEBI" id="CHEBI:57540"/>
    </ligand>
</feature>
<feature type="binding site" evidence="1">
    <location>
        <position position="176"/>
    </location>
    <ligand>
        <name>NAD(+)</name>
        <dbReference type="ChEBI" id="CHEBI:57540"/>
    </ligand>
</feature>
<feature type="binding site" evidence="1">
    <location>
        <position position="293"/>
    </location>
    <ligand>
        <name>NAD(+)</name>
        <dbReference type="ChEBI" id="CHEBI:57540"/>
    </ligand>
</feature>
<feature type="binding site" evidence="1">
    <location>
        <position position="317"/>
    </location>
    <ligand>
        <name>NAD(+)</name>
        <dbReference type="ChEBI" id="CHEBI:57540"/>
    </ligand>
</feature>
<feature type="binding site" evidence="1">
    <location>
        <position position="411"/>
    </location>
    <ligand>
        <name>Zn(2+)</name>
        <dbReference type="ChEBI" id="CHEBI:29105"/>
    </ligand>
</feature>
<feature type="binding site" evidence="1">
    <location>
        <position position="414"/>
    </location>
    <ligand>
        <name>Zn(2+)</name>
        <dbReference type="ChEBI" id="CHEBI:29105"/>
    </ligand>
</feature>
<feature type="binding site" evidence="1">
    <location>
        <position position="429"/>
    </location>
    <ligand>
        <name>Zn(2+)</name>
        <dbReference type="ChEBI" id="CHEBI:29105"/>
    </ligand>
</feature>
<feature type="binding site" evidence="1">
    <location>
        <position position="435"/>
    </location>
    <ligand>
        <name>Zn(2+)</name>
        <dbReference type="ChEBI" id="CHEBI:29105"/>
    </ligand>
</feature>
<protein>
    <recommendedName>
        <fullName evidence="1">DNA ligase</fullName>
        <ecNumber evidence="1">6.5.1.2</ecNumber>
    </recommendedName>
    <alternativeName>
        <fullName evidence="1">Polydeoxyribonucleotide synthase [NAD(+)]</fullName>
    </alternativeName>
</protein>
<dbReference type="EC" id="6.5.1.2" evidence="1"/>
<dbReference type="EMBL" id="CU459141">
    <property type="protein sequence ID" value="CAM87830.1"/>
    <property type="status" value="ALT_INIT"/>
    <property type="molecule type" value="Genomic_DNA"/>
</dbReference>
<dbReference type="RefSeq" id="WP_001018842.1">
    <property type="nucleotide sequence ID" value="NZ_JBDGFB010000027.1"/>
</dbReference>
<dbReference type="SMR" id="B0V8E4"/>
<dbReference type="EnsemblBacteria" id="CAM87830">
    <property type="protein sequence ID" value="CAM87830"/>
    <property type="gene ID" value="ABAYE3010"/>
</dbReference>
<dbReference type="KEGG" id="aby:ABAYE3010"/>
<dbReference type="HOGENOM" id="CLU_007764_2_1_6"/>
<dbReference type="GO" id="GO:0005829">
    <property type="term" value="C:cytosol"/>
    <property type="evidence" value="ECO:0007669"/>
    <property type="project" value="TreeGrafter"/>
</dbReference>
<dbReference type="GO" id="GO:0003677">
    <property type="term" value="F:DNA binding"/>
    <property type="evidence" value="ECO:0007669"/>
    <property type="project" value="InterPro"/>
</dbReference>
<dbReference type="GO" id="GO:0003911">
    <property type="term" value="F:DNA ligase (NAD+) activity"/>
    <property type="evidence" value="ECO:0007669"/>
    <property type="project" value="UniProtKB-UniRule"/>
</dbReference>
<dbReference type="GO" id="GO:0046872">
    <property type="term" value="F:metal ion binding"/>
    <property type="evidence" value="ECO:0007669"/>
    <property type="project" value="UniProtKB-KW"/>
</dbReference>
<dbReference type="GO" id="GO:0006281">
    <property type="term" value="P:DNA repair"/>
    <property type="evidence" value="ECO:0007669"/>
    <property type="project" value="UniProtKB-KW"/>
</dbReference>
<dbReference type="GO" id="GO:0006260">
    <property type="term" value="P:DNA replication"/>
    <property type="evidence" value="ECO:0007669"/>
    <property type="project" value="UniProtKB-KW"/>
</dbReference>
<dbReference type="CDD" id="cd17748">
    <property type="entry name" value="BRCT_DNA_ligase_like"/>
    <property type="match status" value="1"/>
</dbReference>
<dbReference type="CDD" id="cd00114">
    <property type="entry name" value="LIGANc"/>
    <property type="match status" value="1"/>
</dbReference>
<dbReference type="FunFam" id="1.10.150.20:FF:000006">
    <property type="entry name" value="DNA ligase"/>
    <property type="match status" value="1"/>
</dbReference>
<dbReference type="FunFam" id="1.10.150.20:FF:000007">
    <property type="entry name" value="DNA ligase"/>
    <property type="match status" value="1"/>
</dbReference>
<dbReference type="FunFam" id="1.10.287.610:FF:000002">
    <property type="entry name" value="DNA ligase"/>
    <property type="match status" value="1"/>
</dbReference>
<dbReference type="FunFam" id="2.40.50.140:FF:000012">
    <property type="entry name" value="DNA ligase"/>
    <property type="match status" value="1"/>
</dbReference>
<dbReference type="FunFam" id="3.30.470.30:FF:000001">
    <property type="entry name" value="DNA ligase"/>
    <property type="match status" value="1"/>
</dbReference>
<dbReference type="Gene3D" id="6.20.10.30">
    <property type="match status" value="1"/>
</dbReference>
<dbReference type="Gene3D" id="1.10.150.20">
    <property type="entry name" value="5' to 3' exonuclease, C-terminal subdomain"/>
    <property type="match status" value="2"/>
</dbReference>
<dbReference type="Gene3D" id="3.40.50.10190">
    <property type="entry name" value="BRCT domain"/>
    <property type="match status" value="1"/>
</dbReference>
<dbReference type="Gene3D" id="3.30.470.30">
    <property type="entry name" value="DNA ligase/mRNA capping enzyme"/>
    <property type="match status" value="1"/>
</dbReference>
<dbReference type="Gene3D" id="1.10.287.610">
    <property type="entry name" value="Helix hairpin bin"/>
    <property type="match status" value="1"/>
</dbReference>
<dbReference type="Gene3D" id="2.40.50.140">
    <property type="entry name" value="Nucleic acid-binding proteins"/>
    <property type="match status" value="1"/>
</dbReference>
<dbReference type="HAMAP" id="MF_01588">
    <property type="entry name" value="DNA_ligase_A"/>
    <property type="match status" value="1"/>
</dbReference>
<dbReference type="InterPro" id="IPR001357">
    <property type="entry name" value="BRCT_dom"/>
</dbReference>
<dbReference type="InterPro" id="IPR036420">
    <property type="entry name" value="BRCT_dom_sf"/>
</dbReference>
<dbReference type="InterPro" id="IPR041663">
    <property type="entry name" value="DisA/LigA_HHH"/>
</dbReference>
<dbReference type="InterPro" id="IPR001679">
    <property type="entry name" value="DNA_ligase"/>
</dbReference>
<dbReference type="InterPro" id="IPR018239">
    <property type="entry name" value="DNA_ligase_AS"/>
</dbReference>
<dbReference type="InterPro" id="IPR033136">
    <property type="entry name" value="DNA_ligase_CS"/>
</dbReference>
<dbReference type="InterPro" id="IPR013839">
    <property type="entry name" value="DNAligase_adenylation"/>
</dbReference>
<dbReference type="InterPro" id="IPR013840">
    <property type="entry name" value="DNAligase_N"/>
</dbReference>
<dbReference type="InterPro" id="IPR003583">
    <property type="entry name" value="Hlx-hairpin-Hlx_DNA-bd_motif"/>
</dbReference>
<dbReference type="InterPro" id="IPR012340">
    <property type="entry name" value="NA-bd_OB-fold"/>
</dbReference>
<dbReference type="InterPro" id="IPR004150">
    <property type="entry name" value="NAD_DNA_ligase_OB"/>
</dbReference>
<dbReference type="InterPro" id="IPR010994">
    <property type="entry name" value="RuvA_2-like"/>
</dbReference>
<dbReference type="InterPro" id="IPR004149">
    <property type="entry name" value="Znf_DNAligase_C4"/>
</dbReference>
<dbReference type="NCBIfam" id="TIGR00575">
    <property type="entry name" value="dnlj"/>
    <property type="match status" value="1"/>
</dbReference>
<dbReference type="NCBIfam" id="NF005932">
    <property type="entry name" value="PRK07956.1"/>
    <property type="match status" value="1"/>
</dbReference>
<dbReference type="PANTHER" id="PTHR23389">
    <property type="entry name" value="CHROMOSOME TRANSMISSION FIDELITY FACTOR 18"/>
    <property type="match status" value="1"/>
</dbReference>
<dbReference type="PANTHER" id="PTHR23389:SF9">
    <property type="entry name" value="DNA LIGASE"/>
    <property type="match status" value="1"/>
</dbReference>
<dbReference type="Pfam" id="PF00533">
    <property type="entry name" value="BRCT"/>
    <property type="match status" value="1"/>
</dbReference>
<dbReference type="Pfam" id="PF01653">
    <property type="entry name" value="DNA_ligase_aden"/>
    <property type="match status" value="1"/>
</dbReference>
<dbReference type="Pfam" id="PF03120">
    <property type="entry name" value="DNA_ligase_OB"/>
    <property type="match status" value="1"/>
</dbReference>
<dbReference type="Pfam" id="PF03119">
    <property type="entry name" value="DNA_ligase_ZBD"/>
    <property type="match status" value="1"/>
</dbReference>
<dbReference type="Pfam" id="PF12826">
    <property type="entry name" value="HHH_2"/>
    <property type="match status" value="1"/>
</dbReference>
<dbReference type="Pfam" id="PF22745">
    <property type="entry name" value="Nlig-Ia"/>
    <property type="match status" value="1"/>
</dbReference>
<dbReference type="PIRSF" id="PIRSF001604">
    <property type="entry name" value="LigA"/>
    <property type="match status" value="1"/>
</dbReference>
<dbReference type="SMART" id="SM00292">
    <property type="entry name" value="BRCT"/>
    <property type="match status" value="1"/>
</dbReference>
<dbReference type="SMART" id="SM00278">
    <property type="entry name" value="HhH1"/>
    <property type="match status" value="4"/>
</dbReference>
<dbReference type="SMART" id="SM00532">
    <property type="entry name" value="LIGANc"/>
    <property type="match status" value="1"/>
</dbReference>
<dbReference type="SUPFAM" id="SSF52113">
    <property type="entry name" value="BRCT domain"/>
    <property type="match status" value="1"/>
</dbReference>
<dbReference type="SUPFAM" id="SSF56091">
    <property type="entry name" value="DNA ligase/mRNA capping enzyme, catalytic domain"/>
    <property type="match status" value="1"/>
</dbReference>
<dbReference type="SUPFAM" id="SSF50249">
    <property type="entry name" value="Nucleic acid-binding proteins"/>
    <property type="match status" value="1"/>
</dbReference>
<dbReference type="SUPFAM" id="SSF47781">
    <property type="entry name" value="RuvA domain 2-like"/>
    <property type="match status" value="1"/>
</dbReference>
<dbReference type="PROSITE" id="PS50172">
    <property type="entry name" value="BRCT"/>
    <property type="match status" value="1"/>
</dbReference>
<dbReference type="PROSITE" id="PS01055">
    <property type="entry name" value="DNA_LIGASE_N1"/>
    <property type="match status" value="1"/>
</dbReference>
<dbReference type="PROSITE" id="PS01056">
    <property type="entry name" value="DNA_LIGASE_N2"/>
    <property type="match status" value="1"/>
</dbReference>
<keyword id="KW-0227">DNA damage</keyword>
<keyword id="KW-0234">DNA repair</keyword>
<keyword id="KW-0235">DNA replication</keyword>
<keyword id="KW-0436">Ligase</keyword>
<keyword id="KW-0460">Magnesium</keyword>
<keyword id="KW-0464">Manganese</keyword>
<keyword id="KW-0479">Metal-binding</keyword>
<keyword id="KW-0520">NAD</keyword>
<keyword id="KW-0862">Zinc</keyword>
<organism>
    <name type="scientific">Acinetobacter baumannii (strain AYE)</name>
    <dbReference type="NCBI Taxonomy" id="509173"/>
    <lineage>
        <taxon>Bacteria</taxon>
        <taxon>Pseudomonadati</taxon>
        <taxon>Pseudomonadota</taxon>
        <taxon>Gammaproteobacteria</taxon>
        <taxon>Moraxellales</taxon>
        <taxon>Moraxellaceae</taxon>
        <taxon>Acinetobacter</taxon>
        <taxon>Acinetobacter calcoaceticus/baumannii complex</taxon>
    </lineage>
</organism>
<sequence>MAITSVIEQMRQLIQLIAKHNHAYYVMDQPTISDSEYDHLFHQLKALEEQYPELVQADSPTTKVGGQALSKFESVTHVVPMLSLGNVFNQEDLFAFARRVEERLPNQKVQYEVELKLDGLAISLWYENGVLVRGVTRGDGETGEDITQNVKTIRNLPKVLHSEKYEIPRLLEVRGEVLMPKSGFEKLNADQEAKGEKTFANPRNAAAGSLRQLDPNIAAARPLAFYAYGIAQCEPNHGLTTMHDSLQWLTELGFQIAERQYLCNSIQEVQQRYEQIQQERPNLQVEIDGMVVKVDDLKQQQQLGFLSREPRWATAYKFPAQAALTTVEQIDWQVGRTGTLTPVARLNPVFVGGVTVSNVTLHNIGEIHRLDVRIGDTVSVYRTGDVIPKVEKVWPEFRPAEAEVVHLPESCPVCASPVVMPEGEALARCSGGLYCAAQRIEAIRHFVSRKAMDIEGLGDRWVESLLRLDLLKDVADIYHLHEHRETLLGIEKMGEKSVQNLIDAIEASKKTTLARFIYALGIRGVGETTARMLANTFQTLEALKAANVEALKKTPDVGDITAEWIADFFLAPHNIEVLDRLIAAGIHWDAPTAPTRQPLNGESWVLTGTLEQMTRDQATQMLQALGARVSGSVSSKTKCVVAGEKAGSKLEKAAKLGIPVMNETDFLSLMAGYGQTLS</sequence>
<reference key="1">
    <citation type="journal article" date="2008" name="PLoS ONE">
        <title>Comparative analysis of Acinetobacters: three genomes for three lifestyles.</title>
        <authorList>
            <person name="Vallenet D."/>
            <person name="Nordmann P."/>
            <person name="Barbe V."/>
            <person name="Poirel L."/>
            <person name="Mangenot S."/>
            <person name="Bataille E."/>
            <person name="Dossat C."/>
            <person name="Gas S."/>
            <person name="Kreimeyer A."/>
            <person name="Lenoble P."/>
            <person name="Oztas S."/>
            <person name="Poulain J."/>
            <person name="Segurens B."/>
            <person name="Robert C."/>
            <person name="Abergel C."/>
            <person name="Claverie J.-M."/>
            <person name="Raoult D."/>
            <person name="Medigue C."/>
            <person name="Weissenbach J."/>
            <person name="Cruveiller S."/>
        </authorList>
    </citation>
    <scope>NUCLEOTIDE SEQUENCE [LARGE SCALE GENOMIC DNA]</scope>
    <source>
        <strain>AYE</strain>
    </source>
</reference>
<evidence type="ECO:0000255" key="1">
    <source>
        <dbReference type="HAMAP-Rule" id="MF_01588"/>
    </source>
</evidence>
<evidence type="ECO:0000305" key="2"/>